<protein>
    <recommendedName>
        <fullName evidence="10">Phosphatidylglycerophosphatase and protein-tyrosine phosphatase 1</fullName>
        <ecNumber evidence="8 9">3.1.3.27</ecNumber>
    </recommendedName>
    <alternativeName>
        <fullName>PTEN-like phosphatase</fullName>
    </alternativeName>
    <alternativeName>
        <fullName>Phosphoinositide lipid phosphatase</fullName>
    </alternativeName>
    <alternativeName>
        <fullName>Protein-tyrosine phosphatase mitochondrial 1</fullName>
        <ecNumber evidence="1">3.1.3.16</ecNumber>
        <ecNumber evidence="5">3.1.3.48</ecNumber>
    </alternativeName>
</protein>
<dbReference type="EC" id="3.1.3.27" evidence="8 9"/>
<dbReference type="EC" id="3.1.3.16" evidence="1"/>
<dbReference type="EC" id="3.1.3.48" evidence="5"/>
<dbReference type="EMBL" id="AK012674">
    <property type="protein sequence ID" value="BAB28400.1"/>
    <property type="status" value="ALT_FRAME"/>
    <property type="molecule type" value="mRNA"/>
</dbReference>
<dbReference type="EMBL" id="AK014691">
    <property type="protein sequence ID" value="BAB29504.1"/>
    <property type="status" value="ALT_INIT"/>
    <property type="molecule type" value="mRNA"/>
</dbReference>
<dbReference type="EMBL" id="BC026750">
    <property type="protein sequence ID" value="AAH26750.1"/>
    <property type="status" value="ALT_INIT"/>
    <property type="molecule type" value="mRNA"/>
</dbReference>
<dbReference type="EMBL" id="BK005540">
    <property type="protein sequence ID" value="DAA05585.1"/>
    <property type="molecule type" value="mRNA"/>
</dbReference>
<dbReference type="RefSeq" id="NP_079852.1">
    <property type="nucleotide sequence ID" value="NM_025576.2"/>
</dbReference>
<dbReference type="PDB" id="3RGO">
    <property type="method" value="X-ray"/>
    <property type="resolution" value="1.93 A"/>
    <property type="chains" value="A=37-193"/>
</dbReference>
<dbReference type="PDB" id="3RGQ">
    <property type="method" value="X-ray"/>
    <property type="resolution" value="2.05 A"/>
    <property type="chains" value="A=36-191"/>
</dbReference>
<dbReference type="PDBsum" id="3RGO"/>
<dbReference type="PDBsum" id="3RGQ"/>
<dbReference type="SMR" id="Q66GT5"/>
<dbReference type="BioGRID" id="211491">
    <property type="interactions" value="4"/>
</dbReference>
<dbReference type="FunCoup" id="Q66GT5">
    <property type="interactions" value="651"/>
</dbReference>
<dbReference type="STRING" id="10090.ENSMUSP00000159164"/>
<dbReference type="SwissLipids" id="SLP:000000643"/>
<dbReference type="iPTMnet" id="Q66GT5"/>
<dbReference type="PhosphoSitePlus" id="Q66GT5"/>
<dbReference type="jPOST" id="Q66GT5"/>
<dbReference type="PeptideAtlas" id="Q66GT5"/>
<dbReference type="ProteomicsDB" id="302012"/>
<dbReference type="Pumba" id="Q66GT5"/>
<dbReference type="Antibodypedia" id="6453">
    <property type="antibodies" value="162 antibodies from 27 providers"/>
</dbReference>
<dbReference type="DNASU" id="66461"/>
<dbReference type="Ensembl" id="ENSMUST00000111461.13">
    <property type="protein sequence ID" value="ENSMUSP00000159390.2"/>
    <property type="gene ID" value="ENSMUSG00000063235.19"/>
</dbReference>
<dbReference type="GeneID" id="66461"/>
<dbReference type="KEGG" id="mmu:66461"/>
<dbReference type="AGR" id="MGI:1913711"/>
<dbReference type="CTD" id="114971"/>
<dbReference type="MGI" id="MGI:1913711">
    <property type="gene designation" value="Ptpmt1"/>
</dbReference>
<dbReference type="GeneTree" id="ENSGT00390000014065"/>
<dbReference type="InParanoid" id="Q66GT5"/>
<dbReference type="OMA" id="CCSPEEW"/>
<dbReference type="OrthoDB" id="273181at2759"/>
<dbReference type="UniPathway" id="UPA00084">
    <property type="reaction ID" value="UER00504"/>
</dbReference>
<dbReference type="BioGRID-ORCS" id="66461">
    <property type="hits" value="7 hits in 20 CRISPR screens"/>
</dbReference>
<dbReference type="ChiTaRS" id="Ptpmt1">
    <property type="organism name" value="mouse"/>
</dbReference>
<dbReference type="EvolutionaryTrace" id="Q66GT5"/>
<dbReference type="PRO" id="PR:Q66GT5"/>
<dbReference type="Proteomes" id="UP000000589">
    <property type="component" value="Chromosome 2"/>
</dbReference>
<dbReference type="RNAct" id="Q66GT5">
    <property type="molecule type" value="protein"/>
</dbReference>
<dbReference type="Bgee" id="ENSMUSG00000063235">
    <property type="expression patterns" value="Expressed in heart left ventricle and 73 other cell types or tissues"/>
</dbReference>
<dbReference type="GO" id="GO:0005743">
    <property type="term" value="C:mitochondrial inner membrane"/>
    <property type="evidence" value="ECO:0000314"/>
    <property type="project" value="FlyBase"/>
</dbReference>
<dbReference type="GO" id="GO:0005739">
    <property type="term" value="C:mitochondrion"/>
    <property type="evidence" value="ECO:0007005"/>
    <property type="project" value="MGI"/>
</dbReference>
<dbReference type="GO" id="GO:0008962">
    <property type="term" value="F:phosphatidylglycerophosphatase activity"/>
    <property type="evidence" value="ECO:0000315"/>
    <property type="project" value="UniProtKB"/>
</dbReference>
<dbReference type="GO" id="GO:0004439">
    <property type="term" value="F:phosphatidylinositol-4,5-bisphosphate 5-phosphatase activity"/>
    <property type="evidence" value="ECO:0000314"/>
    <property type="project" value="MGI"/>
</dbReference>
<dbReference type="GO" id="GO:0004722">
    <property type="term" value="F:protein serine/threonine phosphatase activity"/>
    <property type="evidence" value="ECO:0007669"/>
    <property type="project" value="UniProtKB-EC"/>
</dbReference>
<dbReference type="GO" id="GO:0004725">
    <property type="term" value="F:protein tyrosine phosphatase activity"/>
    <property type="evidence" value="ECO:0007669"/>
    <property type="project" value="UniProtKB-EC"/>
</dbReference>
<dbReference type="GO" id="GO:0032049">
    <property type="term" value="P:cardiolipin biosynthetic process"/>
    <property type="evidence" value="ECO:0000315"/>
    <property type="project" value="UniProtKB"/>
</dbReference>
<dbReference type="GO" id="GO:0046488">
    <property type="term" value="P:phosphatidylinositol metabolic process"/>
    <property type="evidence" value="ECO:0000305"/>
    <property type="project" value="MGI"/>
</dbReference>
<dbReference type="GO" id="GO:2001242">
    <property type="term" value="P:regulation of intrinsic apoptotic signaling pathway"/>
    <property type="evidence" value="ECO:0007669"/>
    <property type="project" value="Ensembl"/>
</dbReference>
<dbReference type="CDD" id="cd14524">
    <property type="entry name" value="PTPMT1"/>
    <property type="match status" value="1"/>
</dbReference>
<dbReference type="FunFam" id="3.90.190.10:FF:000060">
    <property type="entry name" value="Phosphatidylglycerophosphatase and protein-tyrosine phosphatase 1"/>
    <property type="match status" value="1"/>
</dbReference>
<dbReference type="Gene3D" id="3.90.190.10">
    <property type="entry name" value="Protein tyrosine phosphatase superfamily"/>
    <property type="match status" value="1"/>
</dbReference>
<dbReference type="InterPro" id="IPR000340">
    <property type="entry name" value="Dual-sp_phosphatase_cat-dom"/>
</dbReference>
<dbReference type="InterPro" id="IPR029021">
    <property type="entry name" value="Prot-tyrosine_phosphatase-like"/>
</dbReference>
<dbReference type="InterPro" id="IPR042165">
    <property type="entry name" value="PTPMT1"/>
</dbReference>
<dbReference type="InterPro" id="IPR044596">
    <property type="entry name" value="PTPMT1-like"/>
</dbReference>
<dbReference type="InterPro" id="IPR016130">
    <property type="entry name" value="Tyr_Pase_AS"/>
</dbReference>
<dbReference type="InterPro" id="IPR000387">
    <property type="entry name" value="Tyr_Pase_dom"/>
</dbReference>
<dbReference type="InterPro" id="IPR020422">
    <property type="entry name" value="TYR_PHOSPHATASE_DUAL_dom"/>
</dbReference>
<dbReference type="PANTHER" id="PTHR46712">
    <property type="entry name" value="PHOSPHATIDYLGLYCEROPHOSPHATASE AND PROTEIN-TYROSINE PHOSPHATASE 1"/>
    <property type="match status" value="1"/>
</dbReference>
<dbReference type="PANTHER" id="PTHR46712:SF1">
    <property type="entry name" value="PHOSPHATIDYLGLYCEROPHOSPHATASE AND PROTEIN-TYROSINE PHOSPHATASE 1"/>
    <property type="match status" value="1"/>
</dbReference>
<dbReference type="Pfam" id="PF00782">
    <property type="entry name" value="DSPc"/>
    <property type="match status" value="1"/>
</dbReference>
<dbReference type="SMART" id="SM00195">
    <property type="entry name" value="DSPc"/>
    <property type="match status" value="1"/>
</dbReference>
<dbReference type="SUPFAM" id="SSF52799">
    <property type="entry name" value="(Phosphotyrosine protein) phosphatases II"/>
    <property type="match status" value="1"/>
</dbReference>
<dbReference type="PROSITE" id="PS00383">
    <property type="entry name" value="TYR_PHOSPHATASE_1"/>
    <property type="match status" value="1"/>
</dbReference>
<dbReference type="PROSITE" id="PS50056">
    <property type="entry name" value="TYR_PHOSPHATASE_2"/>
    <property type="match status" value="1"/>
</dbReference>
<dbReference type="PROSITE" id="PS50054">
    <property type="entry name" value="TYR_PHOSPHATASE_DUAL"/>
    <property type="match status" value="1"/>
</dbReference>
<reference key="1">
    <citation type="journal article" date="2005" name="Science">
        <title>The transcriptional landscape of the mammalian genome.</title>
        <authorList>
            <person name="Carninci P."/>
            <person name="Kasukawa T."/>
            <person name="Katayama S."/>
            <person name="Gough J."/>
            <person name="Frith M.C."/>
            <person name="Maeda N."/>
            <person name="Oyama R."/>
            <person name="Ravasi T."/>
            <person name="Lenhard B."/>
            <person name="Wells C."/>
            <person name="Kodzius R."/>
            <person name="Shimokawa K."/>
            <person name="Bajic V.B."/>
            <person name="Brenner S.E."/>
            <person name="Batalov S."/>
            <person name="Forrest A.R."/>
            <person name="Zavolan M."/>
            <person name="Davis M.J."/>
            <person name="Wilming L.G."/>
            <person name="Aidinis V."/>
            <person name="Allen J.E."/>
            <person name="Ambesi-Impiombato A."/>
            <person name="Apweiler R."/>
            <person name="Aturaliya R.N."/>
            <person name="Bailey T.L."/>
            <person name="Bansal M."/>
            <person name="Baxter L."/>
            <person name="Beisel K.W."/>
            <person name="Bersano T."/>
            <person name="Bono H."/>
            <person name="Chalk A.M."/>
            <person name="Chiu K.P."/>
            <person name="Choudhary V."/>
            <person name="Christoffels A."/>
            <person name="Clutterbuck D.R."/>
            <person name="Crowe M.L."/>
            <person name="Dalla E."/>
            <person name="Dalrymple B.P."/>
            <person name="de Bono B."/>
            <person name="Della Gatta G."/>
            <person name="di Bernardo D."/>
            <person name="Down T."/>
            <person name="Engstrom P."/>
            <person name="Fagiolini M."/>
            <person name="Faulkner G."/>
            <person name="Fletcher C.F."/>
            <person name="Fukushima T."/>
            <person name="Furuno M."/>
            <person name="Futaki S."/>
            <person name="Gariboldi M."/>
            <person name="Georgii-Hemming P."/>
            <person name="Gingeras T.R."/>
            <person name="Gojobori T."/>
            <person name="Green R.E."/>
            <person name="Gustincich S."/>
            <person name="Harbers M."/>
            <person name="Hayashi Y."/>
            <person name="Hensch T.K."/>
            <person name="Hirokawa N."/>
            <person name="Hill D."/>
            <person name="Huminiecki L."/>
            <person name="Iacono M."/>
            <person name="Ikeo K."/>
            <person name="Iwama A."/>
            <person name="Ishikawa T."/>
            <person name="Jakt M."/>
            <person name="Kanapin A."/>
            <person name="Katoh M."/>
            <person name="Kawasawa Y."/>
            <person name="Kelso J."/>
            <person name="Kitamura H."/>
            <person name="Kitano H."/>
            <person name="Kollias G."/>
            <person name="Krishnan S.P."/>
            <person name="Kruger A."/>
            <person name="Kummerfeld S.K."/>
            <person name="Kurochkin I.V."/>
            <person name="Lareau L.F."/>
            <person name="Lazarevic D."/>
            <person name="Lipovich L."/>
            <person name="Liu J."/>
            <person name="Liuni S."/>
            <person name="McWilliam S."/>
            <person name="Madan Babu M."/>
            <person name="Madera M."/>
            <person name="Marchionni L."/>
            <person name="Matsuda H."/>
            <person name="Matsuzawa S."/>
            <person name="Miki H."/>
            <person name="Mignone F."/>
            <person name="Miyake S."/>
            <person name="Morris K."/>
            <person name="Mottagui-Tabar S."/>
            <person name="Mulder N."/>
            <person name="Nakano N."/>
            <person name="Nakauchi H."/>
            <person name="Ng P."/>
            <person name="Nilsson R."/>
            <person name="Nishiguchi S."/>
            <person name="Nishikawa S."/>
            <person name="Nori F."/>
            <person name="Ohara O."/>
            <person name="Okazaki Y."/>
            <person name="Orlando V."/>
            <person name="Pang K.C."/>
            <person name="Pavan W.J."/>
            <person name="Pavesi G."/>
            <person name="Pesole G."/>
            <person name="Petrovsky N."/>
            <person name="Piazza S."/>
            <person name="Reed J."/>
            <person name="Reid J.F."/>
            <person name="Ring B.Z."/>
            <person name="Ringwald M."/>
            <person name="Rost B."/>
            <person name="Ruan Y."/>
            <person name="Salzberg S.L."/>
            <person name="Sandelin A."/>
            <person name="Schneider C."/>
            <person name="Schoenbach C."/>
            <person name="Sekiguchi K."/>
            <person name="Semple C.A."/>
            <person name="Seno S."/>
            <person name="Sessa L."/>
            <person name="Sheng Y."/>
            <person name="Shibata Y."/>
            <person name="Shimada H."/>
            <person name="Shimada K."/>
            <person name="Silva D."/>
            <person name="Sinclair B."/>
            <person name="Sperling S."/>
            <person name="Stupka E."/>
            <person name="Sugiura K."/>
            <person name="Sultana R."/>
            <person name="Takenaka Y."/>
            <person name="Taki K."/>
            <person name="Tammoja K."/>
            <person name="Tan S.L."/>
            <person name="Tang S."/>
            <person name="Taylor M.S."/>
            <person name="Tegner J."/>
            <person name="Teichmann S.A."/>
            <person name="Ueda H.R."/>
            <person name="van Nimwegen E."/>
            <person name="Verardo R."/>
            <person name="Wei C.L."/>
            <person name="Yagi K."/>
            <person name="Yamanishi H."/>
            <person name="Zabarovsky E."/>
            <person name="Zhu S."/>
            <person name="Zimmer A."/>
            <person name="Hide W."/>
            <person name="Bult C."/>
            <person name="Grimmond S.M."/>
            <person name="Teasdale R.D."/>
            <person name="Liu E.T."/>
            <person name="Brusic V."/>
            <person name="Quackenbush J."/>
            <person name="Wahlestedt C."/>
            <person name="Mattick J.S."/>
            <person name="Hume D.A."/>
            <person name="Kai C."/>
            <person name="Sasaki D."/>
            <person name="Tomaru Y."/>
            <person name="Fukuda S."/>
            <person name="Kanamori-Katayama M."/>
            <person name="Suzuki M."/>
            <person name="Aoki J."/>
            <person name="Arakawa T."/>
            <person name="Iida J."/>
            <person name="Imamura K."/>
            <person name="Itoh M."/>
            <person name="Kato T."/>
            <person name="Kawaji H."/>
            <person name="Kawagashira N."/>
            <person name="Kawashima T."/>
            <person name="Kojima M."/>
            <person name="Kondo S."/>
            <person name="Konno H."/>
            <person name="Nakano K."/>
            <person name="Ninomiya N."/>
            <person name="Nishio T."/>
            <person name="Okada M."/>
            <person name="Plessy C."/>
            <person name="Shibata K."/>
            <person name="Shiraki T."/>
            <person name="Suzuki S."/>
            <person name="Tagami M."/>
            <person name="Waki K."/>
            <person name="Watahiki A."/>
            <person name="Okamura-Oho Y."/>
            <person name="Suzuki H."/>
            <person name="Kawai J."/>
            <person name="Hayashizaki Y."/>
        </authorList>
    </citation>
    <scope>NUCLEOTIDE SEQUENCE [LARGE SCALE MRNA]</scope>
    <source>
        <strain>C57BL/6J</strain>
        <tissue>Head</tissue>
    </source>
</reference>
<reference key="2">
    <citation type="journal article" date="2004" name="Genome Res.">
        <title>The status, quality, and expansion of the NIH full-length cDNA project: the Mammalian Gene Collection (MGC).</title>
        <authorList>
            <consortium name="The MGC Project Team"/>
        </authorList>
    </citation>
    <scope>NUCLEOTIDE SEQUENCE [LARGE SCALE MRNA]</scope>
    <source>
        <strain>FVB/N</strain>
        <tissue>Liver</tissue>
    </source>
</reference>
<reference key="3">
    <citation type="journal article" date="2004" name="J. Biol. Chem.">
        <title>A PTEN-like phosphatase with a novel substrate specificity.</title>
        <authorList>
            <person name="Pagliarini D.J."/>
            <person name="Worby C.A."/>
            <person name="Dixon J.E."/>
        </authorList>
    </citation>
    <scope>IDENTIFICATION</scope>
    <scope>TISSUE SPECIFICITY</scope>
    <scope>MUTAGENESIS OF CYS-132</scope>
    <scope>CATALYTIC ACTIVITY</scope>
</reference>
<reference key="4">
    <citation type="journal article" date="2005" name="Mol. Cell">
        <title>Involvement of a mitochondrial phosphatase in the regulation of ATP production and insulin secretion in pancreatic beta cells.</title>
        <authorList>
            <person name="Pagliarini D.J."/>
            <person name="Wiley S.E."/>
            <person name="Kimple M.E."/>
            <person name="Dixon J.R."/>
            <person name="Kelly P."/>
            <person name="Worby C.A."/>
            <person name="Casey P.J."/>
            <person name="Dixon J.E."/>
        </authorList>
    </citation>
    <scope>SUBCELLULAR LOCATION</scope>
    <scope>MUTAGENESIS OF 2-ALA--THR-19 AND 2-ALA--TRP-37</scope>
</reference>
<reference key="5">
    <citation type="journal article" date="2010" name="Cell">
        <title>A tissue-specific atlas of mouse protein phosphorylation and expression.</title>
        <authorList>
            <person name="Huttlin E.L."/>
            <person name="Jedrychowski M.P."/>
            <person name="Elias J.E."/>
            <person name="Goswami T."/>
            <person name="Rad R."/>
            <person name="Beausoleil S.A."/>
            <person name="Villen J."/>
            <person name="Haas W."/>
            <person name="Sowa M.E."/>
            <person name="Gygi S.P."/>
        </authorList>
    </citation>
    <scope>IDENTIFICATION BY MASS SPECTROMETRY [LARGE SCALE ANALYSIS]</scope>
    <source>
        <tissue>Brain</tissue>
        <tissue>Brown adipose tissue</tissue>
        <tissue>Heart</tissue>
        <tissue>Kidney</tissue>
        <tissue>Liver</tissue>
        <tissue>Lung</tissue>
        <tissue>Spleen</tissue>
    </source>
</reference>
<reference key="6">
    <citation type="journal article" date="2011" name="Cell Metab.">
        <title>Mitochondrial phosphatase PTPMT1 is essential for cardiolipin biosynthesis.</title>
        <authorList>
            <person name="Zhang J."/>
            <person name="Guan Z."/>
            <person name="Murphy A.N."/>
            <person name="Wiley S.E."/>
            <person name="Perkins G.A."/>
            <person name="Worby C.A."/>
            <person name="Engel J.L."/>
            <person name="Heacock P."/>
            <person name="Nguyen O.K."/>
            <person name="Wang J.H."/>
            <person name="Raetz C.R."/>
            <person name="Dowhan W."/>
            <person name="Dixon J.E."/>
        </authorList>
    </citation>
    <scope>FUNCTION AS PHOSPHATIDYLGLYCEROPHOSPHATASE</scope>
    <scope>CATALYTIC ACTIVITY</scope>
    <scope>PATHWAY</scope>
    <scope>DISRUPTION PHENOTYPE</scope>
    <scope>MUTAGENESIS OF CYS-132</scope>
</reference>
<reference key="7">
    <citation type="journal article" date="2013" name="Mol. Cell">
        <title>SIRT5-mediated lysine desuccinylation impacts diverse metabolic pathways.</title>
        <authorList>
            <person name="Park J."/>
            <person name="Chen Y."/>
            <person name="Tishkoff D.X."/>
            <person name="Peng C."/>
            <person name="Tan M."/>
            <person name="Dai L."/>
            <person name="Xie Z."/>
            <person name="Zhang Y."/>
            <person name="Zwaans B.M."/>
            <person name="Skinner M.E."/>
            <person name="Lombard D.B."/>
            <person name="Zhao Y."/>
        </authorList>
    </citation>
    <scope>SUCCINYLATION [LARGE SCALE ANALYSIS] AT LYS-85</scope>
    <scope>IDENTIFICATION BY MASS SPECTROMETRY [LARGE SCALE ANALYSIS]</scope>
    <source>
        <tissue>Liver</tissue>
    </source>
</reference>
<reference key="8">
    <citation type="journal article" date="2011" name="Proc. Natl. Acad. Sci. U.S.A.">
        <title>Structural and functional analysis of PTPMT1, a phosphatase required for cardiolipin synthesis.</title>
        <authorList>
            <person name="Xiao J."/>
            <person name="Engel J.L."/>
            <person name="Zhang J."/>
            <person name="Chen M.J."/>
            <person name="Manning G."/>
            <person name="Dixon J.E."/>
        </authorList>
    </citation>
    <scope>X-RAY CRYSTALLOGRAPHY (1.93 ANGSTROMS) OF 37-193 IN COMPLEX WITH PHOSPHATIDYLINOSITOL 5-PHOSPHATE</scope>
    <scope>CATALYTIC ACTIVITY</scope>
    <scope>MUTAGENESIS OF GLU-73; GLU-76; ASP-101 AND CYS-132</scope>
</reference>
<sequence length="193" mass="21943">MAASAWLEAGLARVLFYPTLLYTVFRGRVRGPAHRDWYHRIDHTVLLGALPLKNMTRRLVLDENVRGVITMNEEYETRFLCNTSKEWKKAGVEQLRLSTVDMTGVPTLANLHKGVQFALKYQALGQCVYVHCKAGRSRSATMVAAYLIQVHNWSPEEAIEAIAKIRSHISIRPSQLEVLKEFHKEITARAAKN</sequence>
<proteinExistence type="evidence at protein level"/>
<organism>
    <name type="scientific">Mus musculus</name>
    <name type="common">Mouse</name>
    <dbReference type="NCBI Taxonomy" id="10090"/>
    <lineage>
        <taxon>Eukaryota</taxon>
        <taxon>Metazoa</taxon>
        <taxon>Chordata</taxon>
        <taxon>Craniata</taxon>
        <taxon>Vertebrata</taxon>
        <taxon>Euteleostomi</taxon>
        <taxon>Mammalia</taxon>
        <taxon>Eutheria</taxon>
        <taxon>Euarchontoglires</taxon>
        <taxon>Glires</taxon>
        <taxon>Rodentia</taxon>
        <taxon>Myomorpha</taxon>
        <taxon>Muroidea</taxon>
        <taxon>Muridae</taxon>
        <taxon>Murinae</taxon>
        <taxon>Mus</taxon>
        <taxon>Mus</taxon>
    </lineage>
</organism>
<comment type="function">
    <text evidence="1 2 7 8">Lipid phosphatase which dephosphorylates phosphatidylglycerophosphate (PGP) to phosphatidylglycerol (PG) (PubMed:21641550, PubMed:21730175). PGP is an essential intermediate in the biosynthetic pathway of cardiolipin, a mitochondrial-specific phospholipid regulating the membrane integrity and activities of the organelle (PubMed:21641550). Has also been shown to display phosphatase activity toward phosphoprotein substrates, specifically mediates dephosphorylation of mitochondrial proteins, thereby playing an essential role in ATP production (By similarity). Has probably a preference for proteins phosphorylated on Ser and/or Thr residues compared to proteins phosphorylated on Tyr residues (By similarity). Probably involved in regulation of insulin secretion in pancreatic beta cells (By similarity). May prevent intrinsic apoptosis, probably by regulating mitochondrial membrane integrity (By similarity).</text>
</comment>
<comment type="catalytic activity">
    <reaction evidence="8 9">
        <text>a 1,2-diacyl-sn-glycero-3-phospho-(1'-sn-glycero-3'-phosphate) + H2O = a 1,2-diacyl-sn-glycero-3-phospho-(1'-sn-glycerol) + phosphate</text>
        <dbReference type="Rhea" id="RHEA:33751"/>
        <dbReference type="ChEBI" id="CHEBI:15377"/>
        <dbReference type="ChEBI" id="CHEBI:43474"/>
        <dbReference type="ChEBI" id="CHEBI:60110"/>
        <dbReference type="ChEBI" id="CHEBI:64716"/>
        <dbReference type="EC" id="3.1.3.27"/>
    </reaction>
    <physiologicalReaction direction="left-to-right" evidence="8 9">
        <dbReference type="Rhea" id="RHEA:33752"/>
    </physiologicalReaction>
</comment>
<comment type="catalytic activity">
    <reaction evidence="5">
        <text>O-phospho-L-tyrosyl-[protein] + H2O = L-tyrosyl-[protein] + phosphate</text>
        <dbReference type="Rhea" id="RHEA:10684"/>
        <dbReference type="Rhea" id="RHEA-COMP:10136"/>
        <dbReference type="Rhea" id="RHEA-COMP:20101"/>
        <dbReference type="ChEBI" id="CHEBI:15377"/>
        <dbReference type="ChEBI" id="CHEBI:43474"/>
        <dbReference type="ChEBI" id="CHEBI:46858"/>
        <dbReference type="ChEBI" id="CHEBI:61978"/>
        <dbReference type="EC" id="3.1.3.48"/>
    </reaction>
    <physiologicalReaction direction="left-to-right" evidence="10">
        <dbReference type="Rhea" id="RHEA:10685"/>
    </physiologicalReaction>
</comment>
<comment type="catalytic activity">
    <reaction evidence="1">
        <text>O-phospho-L-seryl-[protein] + H2O = L-seryl-[protein] + phosphate</text>
        <dbReference type="Rhea" id="RHEA:20629"/>
        <dbReference type="Rhea" id="RHEA-COMP:9863"/>
        <dbReference type="Rhea" id="RHEA-COMP:11604"/>
        <dbReference type="ChEBI" id="CHEBI:15377"/>
        <dbReference type="ChEBI" id="CHEBI:29999"/>
        <dbReference type="ChEBI" id="CHEBI:43474"/>
        <dbReference type="ChEBI" id="CHEBI:83421"/>
        <dbReference type="EC" id="3.1.3.16"/>
    </reaction>
    <physiologicalReaction direction="left-to-right" evidence="10">
        <dbReference type="Rhea" id="RHEA:20630"/>
    </physiologicalReaction>
</comment>
<comment type="catalytic activity">
    <reaction evidence="1">
        <text>O-phospho-L-threonyl-[protein] + H2O = L-threonyl-[protein] + phosphate</text>
        <dbReference type="Rhea" id="RHEA:47004"/>
        <dbReference type="Rhea" id="RHEA-COMP:11060"/>
        <dbReference type="Rhea" id="RHEA-COMP:11605"/>
        <dbReference type="ChEBI" id="CHEBI:15377"/>
        <dbReference type="ChEBI" id="CHEBI:30013"/>
        <dbReference type="ChEBI" id="CHEBI:43474"/>
        <dbReference type="ChEBI" id="CHEBI:61977"/>
        <dbReference type="EC" id="3.1.3.16"/>
    </reaction>
    <physiologicalReaction direction="left-to-right" evidence="10">
        <dbReference type="Rhea" id="RHEA:47005"/>
    </physiologicalReaction>
</comment>
<comment type="catalytic activity">
    <reaction evidence="9">
        <text>1,2-di-(9Z-octadecenoyl)-sn-glycero-3-phospho-(1'-sn-glycerol-3'-phosphate) + H2O = 1,2-di-(9Z-octadecenoyl)-sn-glycero-3-phospho-(1'-sn-glycerol) + phosphate</text>
        <dbReference type="Rhea" id="RHEA:42304"/>
        <dbReference type="ChEBI" id="CHEBI:15377"/>
        <dbReference type="ChEBI" id="CHEBI:43474"/>
        <dbReference type="ChEBI" id="CHEBI:75163"/>
        <dbReference type="ChEBI" id="CHEBI:78907"/>
    </reaction>
    <physiologicalReaction direction="left-to-right" evidence="9">
        <dbReference type="Rhea" id="RHEA:42305"/>
    </physiologicalReaction>
</comment>
<comment type="catalytic activity">
    <reaction evidence="6">
        <text>1,2-dioctanoyl-sn-glycero-3-phospho-(1D-myo-inositol-5-phosphate) + H2O = 1,2-dioctanoyl-sn-glycero-3-phospho-(1D-myo-inositol) + phosphate</text>
        <dbReference type="Rhea" id="RHEA:42308"/>
        <dbReference type="ChEBI" id="CHEBI:15377"/>
        <dbReference type="ChEBI" id="CHEBI:43474"/>
        <dbReference type="ChEBI" id="CHEBI:65221"/>
        <dbReference type="ChEBI" id="CHEBI:78911"/>
    </reaction>
    <physiologicalReaction direction="left-to-right" evidence="6">
        <dbReference type="Rhea" id="RHEA:42309"/>
    </physiologicalReaction>
</comment>
<comment type="catalytic activity">
    <reaction evidence="6">
        <text>a 1-acyl-2-hexanoyl-sn-glycero-3-phospho-(1D-myo-inositol-5-phosphate) + H2O = a 1-acyl-2-hexanoyl-sn-glycero-3-phospho-(1D-myo-inositol) + phosphate</text>
        <dbReference type="Rhea" id="RHEA:42320"/>
        <dbReference type="ChEBI" id="CHEBI:15377"/>
        <dbReference type="ChEBI" id="CHEBI:43474"/>
        <dbReference type="ChEBI" id="CHEBI:78930"/>
        <dbReference type="ChEBI" id="CHEBI:78931"/>
    </reaction>
    <physiologicalReaction direction="left-to-right" evidence="6">
        <dbReference type="Rhea" id="RHEA:42321"/>
    </physiologicalReaction>
</comment>
<comment type="catalytic activity">
    <reaction evidence="6">
        <text>1,2-dibutyryl-sn-glycero-3-phospho-(1D-myo-inositol-5-phosphate) + H2O = 1,2-dibutyryl-sn-glycero-3-phospho-(1D-myo-inositol) + phosphate</text>
        <dbReference type="Rhea" id="RHEA:42584"/>
        <dbReference type="ChEBI" id="CHEBI:15377"/>
        <dbReference type="ChEBI" id="CHEBI:43474"/>
        <dbReference type="ChEBI" id="CHEBI:82605"/>
        <dbReference type="ChEBI" id="CHEBI:82606"/>
    </reaction>
    <physiologicalReaction direction="left-to-right" evidence="6">
        <dbReference type="Rhea" id="RHEA:42585"/>
    </physiologicalReaction>
</comment>
<comment type="pathway">
    <text evidence="8">Phospholipid metabolism; phosphatidylglycerol biosynthesis; phosphatidylglycerol from CDP-diacylglycerol: step 2/2.</text>
</comment>
<comment type="subunit">
    <text evidence="2">Interacts with STYXL1; the interaction inhibits PTPMT1 catalytic activity.</text>
</comment>
<comment type="subcellular location">
    <subcellularLocation>
        <location evidence="7">Mitochondrion inner membrane</location>
        <topology evidence="1">Peripheral membrane protein</topology>
        <orientation evidence="1">Matrix side</orientation>
    </subcellularLocation>
</comment>
<comment type="tissue specificity">
    <text evidence="6">Predominantly expressed in testis. Expressed at lower level in heart, brain, spleen, lung, liver, skeletal muscle, kidney, bone marrow, eye, lymph node, smooth muscle, prostate, thymus, stomach and uterus.</text>
</comment>
<comment type="disruption phenotype">
    <text evidence="8">Mice die prior to E8.5.</text>
</comment>
<comment type="similarity">
    <text evidence="10">Belongs to the protein-tyrosine phosphatase family. Non-receptor class dual specificity subfamily.</text>
</comment>
<comment type="caution">
    <text evidence="11 12">Was originally (PubMed:15247229) thought to have phosphatidylinositol 5-phosphatase activity, however, it was later shown (PubMed:16039589) that it is probably not the case in vivo.</text>
</comment>
<comment type="sequence caution" evidence="10">
    <conflict type="erroneous initiation">
        <sequence resource="EMBL-CDS" id="AAH26750"/>
    </conflict>
    <text>Extended N-terminus.</text>
</comment>
<comment type="sequence caution" evidence="10">
    <conflict type="frameshift">
        <sequence resource="EMBL-CDS" id="BAB28400"/>
    </conflict>
</comment>
<comment type="sequence caution" evidence="10">
    <conflict type="erroneous initiation">
        <sequence resource="EMBL-CDS" id="BAB29504"/>
    </conflict>
    <text>Extended N-terminus.</text>
</comment>
<accession>Q66GT5</accession>
<accession>Q9CSJ8</accession>
<accession>Q9D622</accession>
<name>PTPM1_MOUSE</name>
<feature type="transit peptide" description="Mitochondrion" evidence="3">
    <location>
        <begin position="1"/>
        <end position="31"/>
    </location>
</feature>
<feature type="chain" id="PRO_0000025424" description="Phosphatidylglycerophosphatase and protein-tyrosine phosphatase 1">
    <location>
        <begin position="32"/>
        <end position="193"/>
    </location>
</feature>
<feature type="domain" description="Tyrosine-protein phosphatase" evidence="4">
    <location>
        <begin position="37"/>
        <end position="188"/>
    </location>
</feature>
<feature type="active site" description="Phosphocysteine intermediate" evidence="4">
    <location>
        <position position="132"/>
    </location>
</feature>
<feature type="modified residue" description="N6-succinyllysine" evidence="14">
    <location>
        <position position="85"/>
    </location>
</feature>
<feature type="mutagenesis site" description="Loss of mitochondrion localization." evidence="7">
    <location>
        <begin position="2"/>
        <end position="37"/>
    </location>
</feature>
<feature type="mutagenesis site" description="Does not affect mitochondrion localization." evidence="7">
    <location>
        <begin position="2"/>
        <end position="19"/>
    </location>
</feature>
<feature type="mutagenesis site" description="Fails to dephosphorylate PGP in vitro." evidence="9">
    <original>E</original>
    <variation>A</variation>
    <location>
        <position position="73"/>
    </location>
</feature>
<feature type="mutagenesis site" description="Fails to dephosphorylate PGP in vitro." evidence="9">
    <original>E</original>
    <variation>A</variation>
    <location>
        <position position="76"/>
    </location>
</feature>
<feature type="mutagenesis site" description="Fails to dephosphorylate PGP in vitro." evidence="9">
    <original>D</original>
    <variation>A</variation>
    <location>
        <position position="101"/>
    </location>
</feature>
<feature type="mutagenesis site" description="Fails to dephosphorylate PGP in vitro. Does not affect level of Akt phosphorylation." evidence="6 8 9">
    <original>C</original>
    <variation>S</variation>
    <location>
        <position position="132"/>
    </location>
</feature>
<feature type="strand" evidence="15">
    <location>
        <begin position="38"/>
        <end position="40"/>
    </location>
</feature>
<feature type="strand" evidence="15">
    <location>
        <begin position="42"/>
        <end position="49"/>
    </location>
</feature>
<feature type="helix" evidence="15">
    <location>
        <begin position="53"/>
        <end position="55"/>
    </location>
</feature>
<feature type="helix" evidence="15">
    <location>
        <begin position="56"/>
        <end position="62"/>
    </location>
</feature>
<feature type="strand" evidence="15">
    <location>
        <begin position="65"/>
        <end position="72"/>
    </location>
</feature>
<feature type="turn" evidence="15">
    <location>
        <begin position="75"/>
        <end position="79"/>
    </location>
</feature>
<feature type="helix" evidence="15">
    <location>
        <begin position="84"/>
        <end position="89"/>
    </location>
</feature>
<feature type="strand" evidence="15">
    <location>
        <begin position="93"/>
        <end position="97"/>
    </location>
</feature>
<feature type="turn" evidence="15">
    <location>
        <begin position="101"/>
        <end position="103"/>
    </location>
</feature>
<feature type="helix" evidence="15">
    <location>
        <begin position="108"/>
        <end position="124"/>
    </location>
</feature>
<feature type="strand" evidence="15">
    <location>
        <begin position="127"/>
        <end position="137"/>
    </location>
</feature>
<feature type="helix" evidence="15">
    <location>
        <begin position="138"/>
        <end position="151"/>
    </location>
</feature>
<feature type="helix" evidence="15">
    <location>
        <begin position="155"/>
        <end position="165"/>
    </location>
</feature>
<feature type="helix" evidence="15">
    <location>
        <begin position="173"/>
        <end position="190"/>
    </location>
</feature>
<evidence type="ECO:0000250" key="1">
    <source>
        <dbReference type="UniProtKB" id="P0C089"/>
    </source>
</evidence>
<evidence type="ECO:0000250" key="2">
    <source>
        <dbReference type="UniProtKB" id="Q8WUK0"/>
    </source>
</evidence>
<evidence type="ECO:0000255" key="3"/>
<evidence type="ECO:0000255" key="4">
    <source>
        <dbReference type="PROSITE-ProRule" id="PRU00160"/>
    </source>
</evidence>
<evidence type="ECO:0000255" key="5">
    <source>
        <dbReference type="PROSITE-ProRule" id="PRU10044"/>
    </source>
</evidence>
<evidence type="ECO:0000269" key="6">
    <source>
    </source>
</evidence>
<evidence type="ECO:0000269" key="7">
    <source>
    </source>
</evidence>
<evidence type="ECO:0000269" key="8">
    <source>
    </source>
</evidence>
<evidence type="ECO:0000269" key="9">
    <source>
    </source>
</evidence>
<evidence type="ECO:0000305" key="10"/>
<evidence type="ECO:0000305" key="11">
    <source>
    </source>
</evidence>
<evidence type="ECO:0000305" key="12">
    <source>
    </source>
</evidence>
<evidence type="ECO:0000312" key="13">
    <source>
        <dbReference type="MGI" id="MGI:1913711"/>
    </source>
</evidence>
<evidence type="ECO:0007744" key="14">
    <source>
    </source>
</evidence>
<evidence type="ECO:0007829" key="15">
    <source>
        <dbReference type="PDB" id="3RGO"/>
    </source>
</evidence>
<keyword id="KW-0002">3D-structure</keyword>
<keyword id="KW-0378">Hydrolase</keyword>
<keyword id="KW-0444">Lipid biosynthesis</keyword>
<keyword id="KW-0443">Lipid metabolism</keyword>
<keyword id="KW-0472">Membrane</keyword>
<keyword id="KW-0496">Mitochondrion</keyword>
<keyword id="KW-0999">Mitochondrion inner membrane</keyword>
<keyword id="KW-0594">Phospholipid biosynthesis</keyword>
<keyword id="KW-1208">Phospholipid metabolism</keyword>
<keyword id="KW-0904">Protein phosphatase</keyword>
<keyword id="KW-1185">Reference proteome</keyword>
<keyword id="KW-0809">Transit peptide</keyword>
<gene>
    <name evidence="13" type="primary">Ptpmt1</name>
    <name type="synonym">Plip</name>
</gene>